<protein>
    <recommendedName>
        <fullName evidence="1">Large ribosomal subunit protein uL11</fullName>
    </recommendedName>
    <alternativeName>
        <fullName evidence="2">50S ribosomal protein L11</fullName>
    </alternativeName>
</protein>
<sequence length="149" mass="15776">MAKKITGYVKLQVPAGAANPSPPIGPALGQRGLNIMEFCKAFNAKTAQMEKGTPIPVIITAYQDRSFTFEMKQPPVTFFLKKAAGLKLGKKPASGSKTPGKGPTVGKISEAQLREIAEKKMPDLNCDTVESAVAMIRGSARAMGLEVVA</sequence>
<accession>B1LY48</accession>
<gene>
    <name evidence="1" type="primary">rplK</name>
    <name type="ordered locus">Mrad2831_3844</name>
</gene>
<feature type="chain" id="PRO_1000195670" description="Large ribosomal subunit protein uL11">
    <location>
        <begin position="1"/>
        <end position="149"/>
    </location>
</feature>
<reference key="1">
    <citation type="submission" date="2008-03" db="EMBL/GenBank/DDBJ databases">
        <title>Complete sequence of chromosome of Methylobacterium radiotolerans JCM 2831.</title>
        <authorList>
            <consortium name="US DOE Joint Genome Institute"/>
            <person name="Copeland A."/>
            <person name="Lucas S."/>
            <person name="Lapidus A."/>
            <person name="Glavina del Rio T."/>
            <person name="Dalin E."/>
            <person name="Tice H."/>
            <person name="Bruce D."/>
            <person name="Goodwin L."/>
            <person name="Pitluck S."/>
            <person name="Kiss H."/>
            <person name="Brettin T."/>
            <person name="Detter J.C."/>
            <person name="Han C."/>
            <person name="Kuske C.R."/>
            <person name="Schmutz J."/>
            <person name="Larimer F."/>
            <person name="Land M."/>
            <person name="Hauser L."/>
            <person name="Kyrpides N."/>
            <person name="Mikhailova N."/>
            <person name="Marx C.J."/>
            <person name="Richardson P."/>
        </authorList>
    </citation>
    <scope>NUCLEOTIDE SEQUENCE [LARGE SCALE GENOMIC DNA]</scope>
    <source>
        <strain>ATCC 27329 / DSM 1819 / JCM 2831 / NBRC 15690 / NCIMB 10815 / 0-1</strain>
    </source>
</reference>
<comment type="function">
    <text evidence="1">Forms part of the ribosomal stalk which helps the ribosome interact with GTP-bound translation factors.</text>
</comment>
<comment type="subunit">
    <text evidence="1">Part of the ribosomal stalk of the 50S ribosomal subunit. Interacts with L10 and the large rRNA to form the base of the stalk. L10 forms an elongated spine to which L12 dimers bind in a sequential fashion forming a multimeric L10(L12)X complex.</text>
</comment>
<comment type="PTM">
    <text evidence="1">One or more lysine residues are methylated.</text>
</comment>
<comment type="similarity">
    <text evidence="1">Belongs to the universal ribosomal protein uL11 family.</text>
</comment>
<proteinExistence type="inferred from homology"/>
<organism>
    <name type="scientific">Methylobacterium radiotolerans (strain ATCC 27329 / DSM 1819 / JCM 2831 / NBRC 15690 / NCIMB 10815 / 0-1)</name>
    <dbReference type="NCBI Taxonomy" id="426355"/>
    <lineage>
        <taxon>Bacteria</taxon>
        <taxon>Pseudomonadati</taxon>
        <taxon>Pseudomonadota</taxon>
        <taxon>Alphaproteobacteria</taxon>
        <taxon>Hyphomicrobiales</taxon>
        <taxon>Methylobacteriaceae</taxon>
        <taxon>Methylobacterium</taxon>
    </lineage>
</organism>
<keyword id="KW-0488">Methylation</keyword>
<keyword id="KW-0687">Ribonucleoprotein</keyword>
<keyword id="KW-0689">Ribosomal protein</keyword>
<keyword id="KW-0694">RNA-binding</keyword>
<keyword id="KW-0699">rRNA-binding</keyword>
<dbReference type="EMBL" id="CP001001">
    <property type="protein sequence ID" value="ACB25819.1"/>
    <property type="molecule type" value="Genomic_DNA"/>
</dbReference>
<dbReference type="RefSeq" id="WP_012320777.1">
    <property type="nucleotide sequence ID" value="NC_010505.1"/>
</dbReference>
<dbReference type="SMR" id="B1LY48"/>
<dbReference type="STRING" id="426355.Mrad2831_3844"/>
<dbReference type="GeneID" id="6139898"/>
<dbReference type="KEGG" id="mrd:Mrad2831_3844"/>
<dbReference type="eggNOG" id="COG0080">
    <property type="taxonomic scope" value="Bacteria"/>
</dbReference>
<dbReference type="HOGENOM" id="CLU_074237_2_0_5"/>
<dbReference type="OrthoDB" id="9802408at2"/>
<dbReference type="Proteomes" id="UP000006589">
    <property type="component" value="Chromosome"/>
</dbReference>
<dbReference type="GO" id="GO:0022625">
    <property type="term" value="C:cytosolic large ribosomal subunit"/>
    <property type="evidence" value="ECO:0007669"/>
    <property type="project" value="TreeGrafter"/>
</dbReference>
<dbReference type="GO" id="GO:0070180">
    <property type="term" value="F:large ribosomal subunit rRNA binding"/>
    <property type="evidence" value="ECO:0007669"/>
    <property type="project" value="UniProtKB-UniRule"/>
</dbReference>
<dbReference type="GO" id="GO:0003735">
    <property type="term" value="F:structural constituent of ribosome"/>
    <property type="evidence" value="ECO:0007669"/>
    <property type="project" value="InterPro"/>
</dbReference>
<dbReference type="GO" id="GO:0006412">
    <property type="term" value="P:translation"/>
    <property type="evidence" value="ECO:0007669"/>
    <property type="project" value="UniProtKB-UniRule"/>
</dbReference>
<dbReference type="CDD" id="cd00349">
    <property type="entry name" value="Ribosomal_L11"/>
    <property type="match status" value="1"/>
</dbReference>
<dbReference type="FunFam" id="3.30.1550.10:FF:000001">
    <property type="entry name" value="50S ribosomal protein L11"/>
    <property type="match status" value="1"/>
</dbReference>
<dbReference type="Gene3D" id="1.10.10.250">
    <property type="entry name" value="Ribosomal protein L11, C-terminal domain"/>
    <property type="match status" value="1"/>
</dbReference>
<dbReference type="Gene3D" id="3.30.1550.10">
    <property type="entry name" value="Ribosomal protein L11/L12, N-terminal domain"/>
    <property type="match status" value="1"/>
</dbReference>
<dbReference type="HAMAP" id="MF_00736">
    <property type="entry name" value="Ribosomal_uL11"/>
    <property type="match status" value="1"/>
</dbReference>
<dbReference type="InterPro" id="IPR000911">
    <property type="entry name" value="Ribosomal_uL11"/>
</dbReference>
<dbReference type="InterPro" id="IPR006519">
    <property type="entry name" value="Ribosomal_uL11_bac-typ"/>
</dbReference>
<dbReference type="InterPro" id="IPR020783">
    <property type="entry name" value="Ribosomal_uL11_C"/>
</dbReference>
<dbReference type="InterPro" id="IPR036769">
    <property type="entry name" value="Ribosomal_uL11_C_sf"/>
</dbReference>
<dbReference type="InterPro" id="IPR020784">
    <property type="entry name" value="Ribosomal_uL11_N"/>
</dbReference>
<dbReference type="InterPro" id="IPR036796">
    <property type="entry name" value="Ribosomal_uL11_N_sf"/>
</dbReference>
<dbReference type="NCBIfam" id="TIGR01632">
    <property type="entry name" value="L11_bact"/>
    <property type="match status" value="1"/>
</dbReference>
<dbReference type="PANTHER" id="PTHR11661">
    <property type="entry name" value="60S RIBOSOMAL PROTEIN L12"/>
    <property type="match status" value="1"/>
</dbReference>
<dbReference type="PANTHER" id="PTHR11661:SF1">
    <property type="entry name" value="LARGE RIBOSOMAL SUBUNIT PROTEIN UL11M"/>
    <property type="match status" value="1"/>
</dbReference>
<dbReference type="Pfam" id="PF00298">
    <property type="entry name" value="Ribosomal_L11"/>
    <property type="match status" value="1"/>
</dbReference>
<dbReference type="Pfam" id="PF03946">
    <property type="entry name" value="Ribosomal_L11_N"/>
    <property type="match status" value="1"/>
</dbReference>
<dbReference type="SMART" id="SM00649">
    <property type="entry name" value="RL11"/>
    <property type="match status" value="1"/>
</dbReference>
<dbReference type="SUPFAM" id="SSF54747">
    <property type="entry name" value="Ribosomal L11/L12e N-terminal domain"/>
    <property type="match status" value="1"/>
</dbReference>
<dbReference type="SUPFAM" id="SSF46906">
    <property type="entry name" value="Ribosomal protein L11, C-terminal domain"/>
    <property type="match status" value="1"/>
</dbReference>
<evidence type="ECO:0000255" key="1">
    <source>
        <dbReference type="HAMAP-Rule" id="MF_00736"/>
    </source>
</evidence>
<evidence type="ECO:0000305" key="2"/>
<name>RL11_METRJ</name>